<gene>
    <name type="primary">gnrh3</name>
</gene>
<comment type="function">
    <text>Stimulates the secretion of gonadotropins.</text>
</comment>
<comment type="subcellular location">
    <subcellularLocation>
        <location>Secreted</location>
    </subcellularLocation>
</comment>
<comment type="tissue specificity">
    <text>Expressed only in the terminal nerve nucleus of the telencephalon.</text>
</comment>
<comment type="similarity">
    <text evidence="3">Belongs to the GnRH family.</text>
</comment>
<accession>P45652</accession>
<keyword id="KW-0027">Amidation</keyword>
<keyword id="KW-0165">Cleavage on pair of basic residues</keyword>
<keyword id="KW-0372">Hormone</keyword>
<keyword id="KW-0873">Pyrrolidone carboxylic acid</keyword>
<keyword id="KW-1185">Reference proteome</keyword>
<keyword id="KW-0964">Secreted</keyword>
<keyword id="KW-0732">Signal</keyword>
<feature type="signal peptide">
    <location>
        <begin position="1"/>
        <end position="23"/>
    </location>
</feature>
<feature type="chain" id="PRO_0000012505" description="Progonadoliberin-3">
    <location>
        <begin position="24"/>
        <end position="90"/>
    </location>
</feature>
<feature type="peptide" id="PRO_0000012506" description="Gonadoliberin-3">
    <location>
        <begin position="24"/>
        <end position="33"/>
    </location>
</feature>
<feature type="peptide" id="PRO_0000012507" description="GnRH-associated peptide 3" evidence="2">
    <location>
        <begin position="37"/>
        <end position="82"/>
    </location>
</feature>
<feature type="modified residue" description="Pyrrolidone carboxylic acid" evidence="1">
    <location>
        <position position="24"/>
    </location>
</feature>
<feature type="modified residue" description="Glycine amide" evidence="1">
    <location>
        <position position="33"/>
    </location>
</feature>
<sequence>MEAGSRVIMQVLLLALVVQVTLSQHWSYGWLPGGKRSVGELEATIRMMGTGGVVSLPDEANAQIQERLRPYNIINDDSSHFDRKKRFPNN</sequence>
<organism>
    <name type="scientific">Haplochromis burtoni</name>
    <name type="common">Burton's mouthbrooder</name>
    <name type="synonym">Chromis burtoni</name>
    <dbReference type="NCBI Taxonomy" id="8153"/>
    <lineage>
        <taxon>Eukaryota</taxon>
        <taxon>Metazoa</taxon>
        <taxon>Chordata</taxon>
        <taxon>Craniata</taxon>
        <taxon>Vertebrata</taxon>
        <taxon>Euteleostomi</taxon>
        <taxon>Actinopterygii</taxon>
        <taxon>Neopterygii</taxon>
        <taxon>Teleostei</taxon>
        <taxon>Neoteleostei</taxon>
        <taxon>Acanthomorphata</taxon>
        <taxon>Ovalentaria</taxon>
        <taxon>Cichlomorphae</taxon>
        <taxon>Cichliformes</taxon>
        <taxon>Cichlidae</taxon>
        <taxon>African cichlids</taxon>
        <taxon>Pseudocrenilabrinae</taxon>
        <taxon>Haplochromini</taxon>
        <taxon>Haplochromis</taxon>
    </lineage>
</organism>
<reference key="1">
    <citation type="journal article" date="1991" name="Mol. Endocrinol.">
        <title>Characterization of complementary DNA encoding the precursor for gonadotropin-releasing hormone and its associated peptide from a teleost fish.</title>
        <authorList>
            <person name="Bond C.T."/>
            <person name="Francis R.C."/>
            <person name="Fernald R.D."/>
            <person name="Adelman J.P."/>
        </authorList>
    </citation>
    <scope>NUCLEOTIDE SEQUENCE [MRNA]</scope>
</reference>
<reference key="2">
    <citation type="journal article" date="1998" name="Gen. Comp. Endocrinol.">
        <title>Genomic structure and expression sites of three gonadotropin-releasing hormone genes in one species.</title>
        <authorList>
            <person name="White R.B."/>
            <person name="Fernald R.D."/>
        </authorList>
    </citation>
    <scope>NUCLEOTIDE SEQUENCE [GENOMIC DNA]</scope>
</reference>
<name>GON3_HAPBU</name>
<evidence type="ECO:0000250" key="1">
    <source>
        <dbReference type="UniProtKB" id="P51918"/>
    </source>
</evidence>
<evidence type="ECO:0000255" key="2"/>
<evidence type="ECO:0000305" key="3"/>
<protein>
    <recommendedName>
        <fullName>Progonadoliberin-3</fullName>
    </recommendedName>
    <alternativeName>
        <fullName>Progonadoliberin III</fullName>
    </alternativeName>
    <component>
        <recommendedName>
            <fullName>Gonadoliberin-3</fullName>
        </recommendedName>
        <alternativeName>
            <fullName>Gonadoliberin III</fullName>
        </alternativeName>
        <alternativeName>
            <fullName>Gonadotropin-releasing hormone III</fullName>
            <shortName>GnRH III</shortName>
        </alternativeName>
        <alternativeName>
            <fullName>Luliberin III</fullName>
        </alternativeName>
        <alternativeName>
            <fullName>Luteinizing hormone-releasing hormone III</fullName>
            <shortName>LH-RH III</shortName>
        </alternativeName>
    </component>
    <component>
        <recommendedName>
            <fullName>GnRH-associated peptide 3</fullName>
        </recommendedName>
        <alternativeName>
            <fullName>GnRH-associated peptide III</fullName>
        </alternativeName>
    </component>
</protein>
<proteinExistence type="evidence at transcript level"/>
<dbReference type="EMBL" id="AF076963">
    <property type="protein sequence ID" value="AAC27718.1"/>
    <property type="molecule type" value="Genomic_DNA"/>
</dbReference>
<dbReference type="PIR" id="A23735">
    <property type="entry name" value="A23735"/>
</dbReference>
<dbReference type="RefSeq" id="NP_001273267.1">
    <property type="nucleotide sequence ID" value="NM_001286338.1"/>
</dbReference>
<dbReference type="RefSeq" id="XP_014191848.1">
    <property type="nucleotide sequence ID" value="XM_014336362.1"/>
</dbReference>
<dbReference type="STRING" id="8153.ENSHBUP00000015568"/>
<dbReference type="Ensembl" id="ENSHBUT00000023858.1">
    <property type="protein sequence ID" value="ENSHBUP00000015568.1"/>
    <property type="gene ID" value="ENSHBUG00000017482.1"/>
</dbReference>
<dbReference type="GeneID" id="102307577"/>
<dbReference type="CTD" id="360141"/>
<dbReference type="GeneTree" id="ENSGT00390000009274"/>
<dbReference type="OMA" id="EATFRMM"/>
<dbReference type="OrthoDB" id="16949at1489911"/>
<dbReference type="Proteomes" id="UP000264840">
    <property type="component" value="Unplaced"/>
</dbReference>
<dbReference type="GO" id="GO:0005615">
    <property type="term" value="C:extracellular space"/>
    <property type="evidence" value="ECO:0000250"/>
    <property type="project" value="UniProtKB"/>
</dbReference>
<dbReference type="GO" id="GO:0005183">
    <property type="term" value="F:gonadotropin hormone-releasing hormone activity"/>
    <property type="evidence" value="ECO:0007669"/>
    <property type="project" value="TreeGrafter"/>
</dbReference>
<dbReference type="GO" id="GO:0031530">
    <property type="term" value="F:gonadotropin-releasing hormone receptor binding"/>
    <property type="evidence" value="ECO:0007669"/>
    <property type="project" value="TreeGrafter"/>
</dbReference>
<dbReference type="InterPro" id="IPR002012">
    <property type="entry name" value="GnRH"/>
</dbReference>
<dbReference type="InterPro" id="IPR019792">
    <property type="entry name" value="Gonadoliberin"/>
</dbReference>
<dbReference type="PANTHER" id="PTHR10522">
    <property type="entry name" value="GONADOLIBERIN"/>
    <property type="match status" value="1"/>
</dbReference>
<dbReference type="PANTHER" id="PTHR10522:SF6">
    <property type="entry name" value="PROGONADOLIBERIN-2"/>
    <property type="match status" value="1"/>
</dbReference>
<dbReference type="Pfam" id="PF00446">
    <property type="entry name" value="GnRH"/>
    <property type="match status" value="1"/>
</dbReference>
<dbReference type="PROSITE" id="PS00473">
    <property type="entry name" value="GNRH"/>
    <property type="match status" value="1"/>
</dbReference>